<gene>
    <name type="primary">glgE2</name>
    <name type="synonym">pep1</name>
    <name type="synonym">pep1B</name>
    <name type="synonym">pep1II</name>
    <name type="ordered locus">SCO7335</name>
    <name type="ORF">SC4G10.14c</name>
</gene>
<name>GLGE2_STRCO</name>
<evidence type="ECO:0000250" key="1"/>
<evidence type="ECO:0000269" key="2">
    <source>
    </source>
</evidence>
<evidence type="ECO:0000305" key="3"/>
<proteinExistence type="evidence at protein level"/>
<feature type="chain" id="PRO_0000054350" description="Alpha-1,4-glucan:maltose-1-phosphate maltosyltransferase 2">
    <location>
        <begin position="1"/>
        <end position="669"/>
    </location>
</feature>
<feature type="active site" description="Nucleophile" evidence="1">
    <location>
        <position position="385"/>
    </location>
</feature>
<feature type="active site" description="Proton donor" evidence="1">
    <location>
        <position position="414"/>
    </location>
</feature>
<feature type="binding site" evidence="1">
    <location>
        <position position="255"/>
    </location>
    <ligand>
        <name>alpha-maltose 1-phosphate</name>
        <dbReference type="ChEBI" id="CHEBI:63576"/>
    </ligand>
</feature>
<feature type="binding site" evidence="1">
    <location>
        <position position="315"/>
    </location>
    <ligand>
        <name>alpha-maltose 1-phosphate</name>
        <dbReference type="ChEBI" id="CHEBI:63576"/>
    </ligand>
</feature>
<feature type="binding site" evidence="1">
    <location>
        <position position="350"/>
    </location>
    <ligand>
        <name>alpha-maltose 1-phosphate</name>
        <dbReference type="ChEBI" id="CHEBI:63576"/>
    </ligand>
</feature>
<feature type="binding site" evidence="1">
    <location>
        <position position="386"/>
    </location>
    <ligand>
        <name>alpha-maltose 1-phosphate</name>
        <dbReference type="ChEBI" id="CHEBI:63576"/>
    </ligand>
</feature>
<feature type="binding site" evidence="1">
    <location>
        <begin position="525"/>
        <end position="526"/>
    </location>
    <ligand>
        <name>alpha-maltose 1-phosphate</name>
        <dbReference type="ChEBI" id="CHEBI:63576"/>
    </ligand>
</feature>
<feature type="site" description="Transition state stabilizer" evidence="1">
    <location>
        <position position="471"/>
    </location>
</feature>
<feature type="sequence conflict" description="In Ref. 1; CAA04606." evidence="3" ref="1">
    <original>W</original>
    <variation>R</variation>
    <location>
        <position position="632"/>
    </location>
</feature>
<sequence>MRMSATVGIGRIPVRDVQPVVEYGRRPAKAVTGETFEVTATVFREGHDAVAANVVLKDPEGRPGPWTPMRELAPGSDRWGATVTPGAPGNWTYRVEAWSDPVATWRHAARIKVPAGIDAGLVLEEGSELYRRAAAGVPKDSGRDVLLAAATALLDDTLPVATRLAAALTPQVDAVLARHPLRDLVTSSDPLPLLVERERALYGAWYEFFPRSEGTPHTPHGTFRTAARRLPAIAAMGFDVVYLPPIHPIGTTHRKGRNNTLSATGDDVGVPWAIGSPEGGHDSIHPALGTLDDFDHFVTEAARHGLEIALDFALQCSPDHPWVHKHPEWFHHRPDGTIAHAENPPKKYQDIYPIAFDADPDGLATETVRILRHWMDHGVRIFRVDNPHTKPVAFWERVIADINGTDPDVIFLAEAFTRPAMMATLAQIGFQQSYTYFTWRNTKQELTEYLEELSGEAAAYMRPNFFANTPDILHAYLQHGGRPAFEVRAVLAATLSPTWGIYSGYELCENTPLREGSEEYLDSEKYQLKPRDWTRAAREGTTIAPLVTRLNTIRREHPALHRLRNLRFHHTDNDALIAYSKRVGSDVVLVVANLDPHRTQEATISLDMPQLGLDWHDSVPVHDELTGRTYHWGRANYVRLEPGRAPAHVFHVRRPSAAAAPQNGGSGAS</sequence>
<keyword id="KW-0119">Carbohydrate metabolism</keyword>
<keyword id="KW-0328">Glycosyltransferase</keyword>
<keyword id="KW-1185">Reference proteome</keyword>
<keyword id="KW-0808">Transferase</keyword>
<dbReference type="EC" id="2.4.99.16"/>
<dbReference type="EMBL" id="AJ001206">
    <property type="protein sequence ID" value="CAA04606.1"/>
    <property type="molecule type" value="Genomic_DNA"/>
</dbReference>
<dbReference type="EMBL" id="AL939131">
    <property type="protein sequence ID" value="CAB92881.1"/>
    <property type="molecule type" value="Genomic_DNA"/>
</dbReference>
<dbReference type="RefSeq" id="NP_631389.1">
    <property type="nucleotide sequence ID" value="NC_003888.3"/>
</dbReference>
<dbReference type="RefSeq" id="WP_011031595.1">
    <property type="nucleotide sequence ID" value="NZ_CP042324.1"/>
</dbReference>
<dbReference type="SMR" id="Q9KY04"/>
<dbReference type="FunCoup" id="Q9KY04">
    <property type="interactions" value="27"/>
</dbReference>
<dbReference type="STRING" id="100226.gene:17764995"/>
<dbReference type="CAZy" id="GH13">
    <property type="family name" value="Glycoside Hydrolase Family 13"/>
</dbReference>
<dbReference type="PaxDb" id="100226-SCO7335"/>
<dbReference type="KEGG" id="sco:SCO7335"/>
<dbReference type="PATRIC" id="fig|100226.15.peg.7439"/>
<dbReference type="eggNOG" id="COG0366">
    <property type="taxonomic scope" value="Bacteria"/>
</dbReference>
<dbReference type="HOGENOM" id="CLU_015798_0_0_11"/>
<dbReference type="InParanoid" id="Q9KY04"/>
<dbReference type="OrthoDB" id="9805159at2"/>
<dbReference type="PhylomeDB" id="Q9KY04"/>
<dbReference type="Proteomes" id="UP000001973">
    <property type="component" value="Chromosome"/>
</dbReference>
<dbReference type="GO" id="GO:0004556">
    <property type="term" value="F:alpha-amylase activity"/>
    <property type="evidence" value="ECO:0000318"/>
    <property type="project" value="GO_Central"/>
</dbReference>
<dbReference type="GO" id="GO:0016758">
    <property type="term" value="F:hexosyltransferase activity"/>
    <property type="evidence" value="ECO:0007669"/>
    <property type="project" value="UniProtKB-UniRule"/>
</dbReference>
<dbReference type="GO" id="GO:0030979">
    <property type="term" value="P:alpha-glucan biosynthetic process"/>
    <property type="evidence" value="ECO:0007669"/>
    <property type="project" value="UniProtKB-UniRule"/>
</dbReference>
<dbReference type="GO" id="GO:0009313">
    <property type="term" value="P:oligosaccharide catabolic process"/>
    <property type="evidence" value="ECO:0000318"/>
    <property type="project" value="GO_Central"/>
</dbReference>
<dbReference type="CDD" id="cd11344">
    <property type="entry name" value="AmyAc_GlgE_like"/>
    <property type="match status" value="1"/>
</dbReference>
<dbReference type="Gene3D" id="3.20.20.80">
    <property type="entry name" value="Glycosidases"/>
    <property type="match status" value="1"/>
</dbReference>
<dbReference type="Gene3D" id="2.60.40.1180">
    <property type="entry name" value="Golgi alpha-mannosidase II"/>
    <property type="match status" value="1"/>
</dbReference>
<dbReference type="Gene3D" id="2.60.40.10">
    <property type="entry name" value="Immunoglobulins"/>
    <property type="match status" value="1"/>
</dbReference>
<dbReference type="Gene3D" id="1.20.58.80">
    <property type="entry name" value="Phosphotransferase system, lactose/cellobiose-type IIA subunit"/>
    <property type="match status" value="1"/>
</dbReference>
<dbReference type="HAMAP" id="MF_02124">
    <property type="entry name" value="GlgE"/>
    <property type="match status" value="1"/>
</dbReference>
<dbReference type="InterPro" id="IPR026585">
    <property type="entry name" value="GlgE"/>
</dbReference>
<dbReference type="InterPro" id="IPR049171">
    <property type="entry name" value="GLGE_C"/>
</dbReference>
<dbReference type="InterPro" id="IPR021828">
    <property type="entry name" value="GlgE_dom_N/S"/>
</dbReference>
<dbReference type="InterPro" id="IPR006047">
    <property type="entry name" value="Glyco_hydro_13_cat_dom"/>
</dbReference>
<dbReference type="InterPro" id="IPR013780">
    <property type="entry name" value="Glyco_hydro_b"/>
</dbReference>
<dbReference type="InterPro" id="IPR017853">
    <property type="entry name" value="Glycoside_hydrolase_SF"/>
</dbReference>
<dbReference type="InterPro" id="IPR013783">
    <property type="entry name" value="Ig-like_fold"/>
</dbReference>
<dbReference type="PANTHER" id="PTHR47786">
    <property type="entry name" value="ALPHA-1,4-GLUCAN:MALTOSE-1-PHOSPHATE MALTOSYLTRANSFERASE"/>
    <property type="match status" value="1"/>
</dbReference>
<dbReference type="PANTHER" id="PTHR47786:SF2">
    <property type="entry name" value="GLYCOSYL HYDROLASE FAMILY 13 CATALYTIC DOMAIN-CONTAINING PROTEIN"/>
    <property type="match status" value="1"/>
</dbReference>
<dbReference type="Pfam" id="PF21702">
    <property type="entry name" value="GLGE_C"/>
    <property type="match status" value="1"/>
</dbReference>
<dbReference type="Pfam" id="PF11896">
    <property type="entry name" value="GlgE_dom_N_S"/>
    <property type="match status" value="1"/>
</dbReference>
<dbReference type="SMART" id="SM00642">
    <property type="entry name" value="Aamy"/>
    <property type="match status" value="1"/>
</dbReference>
<dbReference type="SUPFAM" id="SSF51445">
    <property type="entry name" value="(Trans)glycosidases"/>
    <property type="match status" value="1"/>
</dbReference>
<dbReference type="SUPFAM" id="SSF51011">
    <property type="entry name" value="Glycosyl hydrolase domain"/>
    <property type="match status" value="1"/>
</dbReference>
<organism>
    <name type="scientific">Streptomyces coelicolor (strain ATCC BAA-471 / A3(2) / M145)</name>
    <dbReference type="NCBI Taxonomy" id="100226"/>
    <lineage>
        <taxon>Bacteria</taxon>
        <taxon>Bacillati</taxon>
        <taxon>Actinomycetota</taxon>
        <taxon>Actinomycetes</taxon>
        <taxon>Kitasatosporales</taxon>
        <taxon>Streptomycetaceae</taxon>
        <taxon>Streptomyces</taxon>
        <taxon>Streptomyces albidoflavus group</taxon>
    </lineage>
</organism>
<protein>
    <recommendedName>
        <fullName>Alpha-1,4-glucan:maltose-1-phosphate maltosyltransferase 2</fullName>
        <shortName>GMPMT 2</shortName>
        <ecNumber>2.4.99.16</ecNumber>
    </recommendedName>
    <alternativeName>
        <fullName>(1-&gt;4)-alpha-D-glucan:maltose-1-phosphate alpha-D-maltosyltransferase 2</fullName>
    </alternativeName>
</protein>
<reference key="1">
    <citation type="journal article" date="2000" name="Mol. Gen. Genet.">
        <title>Duplicated gene clusters suggest an interplay of glycogen and trehalose metabolism during sequential stages of aerial mycelium development in Streptomyces coelicolor A3(2).</title>
        <authorList>
            <person name="Schneider D."/>
            <person name="Bruton C.J."/>
            <person name="Chater K.F."/>
        </authorList>
    </citation>
    <scope>NUCLEOTIDE SEQUENCE [GENOMIC DNA]</scope>
    <source>
        <strain>A3(2) / NRRL B-16638</strain>
    </source>
</reference>
<reference key="2">
    <citation type="journal article" date="2002" name="Nature">
        <title>Complete genome sequence of the model actinomycete Streptomyces coelicolor A3(2).</title>
        <authorList>
            <person name="Bentley S.D."/>
            <person name="Chater K.F."/>
            <person name="Cerdeno-Tarraga A.-M."/>
            <person name="Challis G.L."/>
            <person name="Thomson N.R."/>
            <person name="James K.D."/>
            <person name="Harris D.E."/>
            <person name="Quail M.A."/>
            <person name="Kieser H."/>
            <person name="Harper D."/>
            <person name="Bateman A."/>
            <person name="Brown S."/>
            <person name="Chandra G."/>
            <person name="Chen C.W."/>
            <person name="Collins M."/>
            <person name="Cronin A."/>
            <person name="Fraser A."/>
            <person name="Goble A."/>
            <person name="Hidalgo J."/>
            <person name="Hornsby T."/>
            <person name="Howarth S."/>
            <person name="Huang C.-H."/>
            <person name="Kieser T."/>
            <person name="Larke L."/>
            <person name="Murphy L.D."/>
            <person name="Oliver K."/>
            <person name="O'Neil S."/>
            <person name="Rabbinowitsch E."/>
            <person name="Rajandream M.A."/>
            <person name="Rutherford K.M."/>
            <person name="Rutter S."/>
            <person name="Seeger K."/>
            <person name="Saunders D."/>
            <person name="Sharp S."/>
            <person name="Squares R."/>
            <person name="Squares S."/>
            <person name="Taylor K."/>
            <person name="Warren T."/>
            <person name="Wietzorrek A."/>
            <person name="Woodward J.R."/>
            <person name="Barrell B.G."/>
            <person name="Parkhill J."/>
            <person name="Hopwood D.A."/>
        </authorList>
    </citation>
    <scope>NUCLEOTIDE SEQUENCE [LARGE SCALE GENOMIC DNA]</scope>
    <source>
        <strain>ATCC BAA-471 / A3(2) / M145</strain>
    </source>
</reference>
<reference key="3">
    <citation type="journal article" date="2011" name="J. Biol. Chem.">
        <title>Structure of a Streptomyces maltosyltransferase GlgE: a homologue of a genetically validated anti-tuberculosis target.</title>
        <authorList>
            <person name="Syson K."/>
            <person name="Stevenson C.E."/>
            <person name="Rejzek M."/>
            <person name="Fairhurst S.A."/>
            <person name="Nair A."/>
            <person name="Bruton C.J."/>
            <person name="Field R.A."/>
            <person name="Chater K.F."/>
            <person name="Lawson D.M."/>
            <person name="Bornemann S."/>
        </authorList>
    </citation>
    <scope>FUNCTION</scope>
    <scope>CATALYTIC ACTIVITY</scope>
    <scope>SUBSTRATE SPECIFICITY</scope>
    <scope>KINETIC PARAMETERS</scope>
    <source>
        <strain>ATCC BAA-471 / A3(2) / M145</strain>
    </source>
</reference>
<accession>Q9KY04</accession>
<accession>O70012</accession>
<comment type="function">
    <text evidence="2">Maltosyltransferase that uses maltose 1-phosphate (M1P) as the sugar donor to elongate linear or branched alpha-(1-&gt;4)-glucans. Maltooligosaccharides with a degree of polymerization (DP) superior or equal to 4 are efficient acceptors, with DP6 being optimal in the GlgE-catalyzed polymerization with M1P. Is probably involved in a branched alpha-glucan biosynthetic pathway from trehalose, together with TreS, Mak and GlgB.</text>
</comment>
<comment type="catalytic activity">
    <reaction evidence="2">
        <text>alpha-maltose 1-phosphate + [(1-&gt;4)-alpha-D-glucosyl](n) = [(1-&gt;4)-alpha-D-glucosyl](n+2) + phosphate</text>
        <dbReference type="Rhea" id="RHEA:42692"/>
        <dbReference type="Rhea" id="RHEA-COMP:9584"/>
        <dbReference type="Rhea" id="RHEA-COMP:10183"/>
        <dbReference type="ChEBI" id="CHEBI:15444"/>
        <dbReference type="ChEBI" id="CHEBI:43474"/>
        <dbReference type="ChEBI" id="CHEBI:63576"/>
        <dbReference type="EC" id="2.4.99.16"/>
    </reaction>
</comment>
<comment type="biophysicochemical properties">
    <kinetics>
        <KM evidence="2">2.3 mM for maltohexaose (in the presence of 5 mM M1P)</KM>
        <KM evidence="2">1.2 mM for alpha-maltose 1-phosphate</KM>
    </kinetics>
</comment>
<comment type="subunit">
    <text evidence="1">Homodimer.</text>
</comment>
<comment type="similarity">
    <text evidence="3">Belongs to the glycosyl hydrolase 13 family. GlgE subfamily.</text>
</comment>